<keyword id="KW-0067">ATP-binding</keyword>
<keyword id="KW-0963">Cytoplasm</keyword>
<keyword id="KW-1015">Disulfide bond</keyword>
<keyword id="KW-0547">Nucleotide-binding</keyword>
<keyword id="KW-0694">RNA-binding</keyword>
<keyword id="KW-0808">Transferase</keyword>
<keyword id="KW-0819">tRNA processing</keyword>
<keyword id="KW-0820">tRNA-binding</keyword>
<protein>
    <recommendedName>
        <fullName evidence="1">tRNA-specific 2-thiouridylase MnmA</fullName>
        <ecNumber evidence="1">2.8.1.13</ecNumber>
    </recommendedName>
</protein>
<sequence>MSAIPNASNTSASTSFDAHRPLTLADINDPSTKHVIVGMSGGVDSSVSAVLLQQAGFMVEGLFMKNWEEDDGTEYCTAMDDLADAQAVCDKIGIKLHTANFAMEYWDRVFEHFLAEYKAGRTPNPDILCNKEIKFKAFLDYALTLGADYIATGHYTRRSVNYKNNDGIEVAQLLRGLDNNKDQSYFLHAVGGDKLAKTLFPVGELKKPVVRQIAEEHDLITANKKDSTGICFIGERRFKDFLQQYLPAQKGDIVTDDGITIGTHDGLMYYTLGQRGGIGIGGVKDRPEEPWFVLAKDLDNNRLIVGQGHEHAMMLSNELQAYKLDWVDVLPPADIFSEDGLRCMAKSRYRQPDQACTVFANNENGSEVRVVFDEPQRAVTPGQSAVFYIDEVCLGGGVIASIDAPCGI</sequence>
<organism>
    <name type="scientific">Psychrobacter cryohalolentis (strain ATCC BAA-1226 / DSM 17306 / VKM B-2378 / K5)</name>
    <dbReference type="NCBI Taxonomy" id="335284"/>
    <lineage>
        <taxon>Bacteria</taxon>
        <taxon>Pseudomonadati</taxon>
        <taxon>Pseudomonadota</taxon>
        <taxon>Gammaproteobacteria</taxon>
        <taxon>Moraxellales</taxon>
        <taxon>Moraxellaceae</taxon>
        <taxon>Psychrobacter</taxon>
    </lineage>
</organism>
<feature type="chain" id="PRO_0000349762" description="tRNA-specific 2-thiouridylase MnmA">
    <location>
        <begin position="1"/>
        <end position="408"/>
    </location>
</feature>
<feature type="region of interest" description="Interaction with target base in tRNA" evidence="1">
    <location>
        <begin position="124"/>
        <end position="126"/>
    </location>
</feature>
<feature type="region of interest" description="Interaction with tRNA" evidence="1">
    <location>
        <begin position="181"/>
        <end position="183"/>
    </location>
</feature>
<feature type="region of interest" description="Interaction with tRNA" evidence="1">
    <location>
        <begin position="348"/>
        <end position="349"/>
    </location>
</feature>
<feature type="active site" description="Nucleophile" evidence="1">
    <location>
        <position position="129"/>
    </location>
</feature>
<feature type="active site" description="Cysteine persulfide intermediate" evidence="1">
    <location>
        <position position="231"/>
    </location>
</feature>
<feature type="binding site" evidence="1">
    <location>
        <begin position="38"/>
        <end position="45"/>
    </location>
    <ligand>
        <name>ATP</name>
        <dbReference type="ChEBI" id="CHEBI:30616"/>
    </ligand>
</feature>
<feature type="binding site" evidence="1">
    <location>
        <position position="64"/>
    </location>
    <ligand>
        <name>ATP</name>
        <dbReference type="ChEBI" id="CHEBI:30616"/>
    </ligand>
</feature>
<feature type="binding site" evidence="1">
    <location>
        <position position="153"/>
    </location>
    <ligand>
        <name>ATP</name>
        <dbReference type="ChEBI" id="CHEBI:30616"/>
    </ligand>
</feature>
<feature type="site" description="Interaction with tRNA" evidence="1">
    <location>
        <position position="154"/>
    </location>
</feature>
<feature type="site" description="Interaction with tRNA" evidence="1">
    <location>
        <position position="383"/>
    </location>
</feature>
<feature type="disulfide bond" description="Alternate" evidence="1">
    <location>
        <begin position="129"/>
        <end position="231"/>
    </location>
</feature>
<gene>
    <name evidence="1" type="primary">mnmA</name>
    <name type="ordered locus">Pcryo_1148</name>
</gene>
<accession>Q1QBM4</accession>
<evidence type="ECO:0000255" key="1">
    <source>
        <dbReference type="HAMAP-Rule" id="MF_00144"/>
    </source>
</evidence>
<proteinExistence type="inferred from homology"/>
<dbReference type="EC" id="2.8.1.13" evidence="1"/>
<dbReference type="EMBL" id="CP000323">
    <property type="protein sequence ID" value="ABE74929.1"/>
    <property type="molecule type" value="Genomic_DNA"/>
</dbReference>
<dbReference type="RefSeq" id="WP_011513484.1">
    <property type="nucleotide sequence ID" value="NC_007969.1"/>
</dbReference>
<dbReference type="SMR" id="Q1QBM4"/>
<dbReference type="STRING" id="335284.Pcryo_1148"/>
<dbReference type="KEGG" id="pcr:Pcryo_1148"/>
<dbReference type="eggNOG" id="COG0482">
    <property type="taxonomic scope" value="Bacteria"/>
</dbReference>
<dbReference type="HOGENOM" id="CLU_035188_1_0_6"/>
<dbReference type="Proteomes" id="UP000002425">
    <property type="component" value="Chromosome"/>
</dbReference>
<dbReference type="GO" id="GO:0005737">
    <property type="term" value="C:cytoplasm"/>
    <property type="evidence" value="ECO:0007669"/>
    <property type="project" value="UniProtKB-SubCell"/>
</dbReference>
<dbReference type="GO" id="GO:0005524">
    <property type="term" value="F:ATP binding"/>
    <property type="evidence" value="ECO:0007669"/>
    <property type="project" value="UniProtKB-KW"/>
</dbReference>
<dbReference type="GO" id="GO:0000049">
    <property type="term" value="F:tRNA binding"/>
    <property type="evidence" value="ECO:0007669"/>
    <property type="project" value="UniProtKB-KW"/>
</dbReference>
<dbReference type="GO" id="GO:0103016">
    <property type="term" value="F:tRNA-uridine 2-sulfurtransferase activity"/>
    <property type="evidence" value="ECO:0007669"/>
    <property type="project" value="UniProtKB-EC"/>
</dbReference>
<dbReference type="GO" id="GO:0002143">
    <property type="term" value="P:tRNA wobble position uridine thiolation"/>
    <property type="evidence" value="ECO:0007669"/>
    <property type="project" value="TreeGrafter"/>
</dbReference>
<dbReference type="CDD" id="cd01998">
    <property type="entry name" value="MnmA_TRMU-like"/>
    <property type="match status" value="1"/>
</dbReference>
<dbReference type="FunFam" id="2.30.30.280:FF:000001">
    <property type="entry name" value="tRNA-specific 2-thiouridylase MnmA"/>
    <property type="match status" value="1"/>
</dbReference>
<dbReference type="FunFam" id="2.40.30.10:FF:000023">
    <property type="entry name" value="tRNA-specific 2-thiouridylase MnmA"/>
    <property type="match status" value="1"/>
</dbReference>
<dbReference type="FunFam" id="3.40.50.620:FF:000004">
    <property type="entry name" value="tRNA-specific 2-thiouridylase MnmA"/>
    <property type="match status" value="1"/>
</dbReference>
<dbReference type="Gene3D" id="2.30.30.280">
    <property type="entry name" value="Adenine nucleotide alpha hydrolases-like domains"/>
    <property type="match status" value="1"/>
</dbReference>
<dbReference type="Gene3D" id="3.40.50.620">
    <property type="entry name" value="HUPs"/>
    <property type="match status" value="1"/>
</dbReference>
<dbReference type="Gene3D" id="2.40.30.10">
    <property type="entry name" value="Translation factors"/>
    <property type="match status" value="1"/>
</dbReference>
<dbReference type="HAMAP" id="MF_00144">
    <property type="entry name" value="tRNA_thiouridyl_MnmA"/>
    <property type="match status" value="1"/>
</dbReference>
<dbReference type="InterPro" id="IPR004506">
    <property type="entry name" value="MnmA-like"/>
</dbReference>
<dbReference type="InterPro" id="IPR046885">
    <property type="entry name" value="MnmA-like_C"/>
</dbReference>
<dbReference type="InterPro" id="IPR046884">
    <property type="entry name" value="MnmA-like_central"/>
</dbReference>
<dbReference type="InterPro" id="IPR023382">
    <property type="entry name" value="MnmA-like_central_sf"/>
</dbReference>
<dbReference type="InterPro" id="IPR014729">
    <property type="entry name" value="Rossmann-like_a/b/a_fold"/>
</dbReference>
<dbReference type="NCBIfam" id="NF001138">
    <property type="entry name" value="PRK00143.1"/>
    <property type="match status" value="1"/>
</dbReference>
<dbReference type="NCBIfam" id="TIGR00420">
    <property type="entry name" value="trmU"/>
    <property type="match status" value="1"/>
</dbReference>
<dbReference type="PANTHER" id="PTHR11933:SF5">
    <property type="entry name" value="MITOCHONDRIAL TRNA-SPECIFIC 2-THIOURIDYLASE 1"/>
    <property type="match status" value="1"/>
</dbReference>
<dbReference type="PANTHER" id="PTHR11933">
    <property type="entry name" value="TRNA 5-METHYLAMINOMETHYL-2-THIOURIDYLATE -METHYLTRANSFERASE"/>
    <property type="match status" value="1"/>
</dbReference>
<dbReference type="Pfam" id="PF03054">
    <property type="entry name" value="tRNA_Me_trans"/>
    <property type="match status" value="1"/>
</dbReference>
<dbReference type="Pfam" id="PF20258">
    <property type="entry name" value="tRNA_Me_trans_C"/>
    <property type="match status" value="1"/>
</dbReference>
<dbReference type="Pfam" id="PF20259">
    <property type="entry name" value="tRNA_Me_trans_M"/>
    <property type="match status" value="1"/>
</dbReference>
<dbReference type="SUPFAM" id="SSF52402">
    <property type="entry name" value="Adenine nucleotide alpha hydrolases-like"/>
    <property type="match status" value="1"/>
</dbReference>
<name>MNMA_PSYCK</name>
<reference key="1">
    <citation type="submission" date="2006-03" db="EMBL/GenBank/DDBJ databases">
        <title>Complete sequence of chromosome of Psychrobacter cryohalolentis K5.</title>
        <authorList>
            <consortium name="US DOE Joint Genome Institute"/>
            <person name="Copeland A."/>
            <person name="Lucas S."/>
            <person name="Lapidus A."/>
            <person name="Barry K."/>
            <person name="Detter J.C."/>
            <person name="Glavina T."/>
            <person name="Hammon N."/>
            <person name="Israni S."/>
            <person name="Dalin E."/>
            <person name="Tice H."/>
            <person name="Pitluck S."/>
            <person name="Brettin T."/>
            <person name="Bruce D."/>
            <person name="Han C."/>
            <person name="Tapia R."/>
            <person name="Sims D.R."/>
            <person name="Gilna P."/>
            <person name="Schmutz J."/>
            <person name="Larimer F."/>
            <person name="Land M."/>
            <person name="Hauser L."/>
            <person name="Kyrpides N."/>
            <person name="Kim E."/>
            <person name="Richardson P."/>
        </authorList>
    </citation>
    <scope>NUCLEOTIDE SEQUENCE [LARGE SCALE GENOMIC DNA]</scope>
    <source>
        <strain>ATCC BAA-1226 / DSM 17306 / VKM B-2378 / K5</strain>
    </source>
</reference>
<comment type="function">
    <text evidence="1">Catalyzes the 2-thiolation of uridine at the wobble position (U34) of tRNA, leading to the formation of s(2)U34.</text>
</comment>
<comment type="catalytic activity">
    <reaction evidence="1">
        <text>S-sulfanyl-L-cysteinyl-[protein] + uridine(34) in tRNA + AH2 + ATP = 2-thiouridine(34) in tRNA + L-cysteinyl-[protein] + A + AMP + diphosphate + H(+)</text>
        <dbReference type="Rhea" id="RHEA:47032"/>
        <dbReference type="Rhea" id="RHEA-COMP:10131"/>
        <dbReference type="Rhea" id="RHEA-COMP:11726"/>
        <dbReference type="Rhea" id="RHEA-COMP:11727"/>
        <dbReference type="Rhea" id="RHEA-COMP:11728"/>
        <dbReference type="ChEBI" id="CHEBI:13193"/>
        <dbReference type="ChEBI" id="CHEBI:15378"/>
        <dbReference type="ChEBI" id="CHEBI:17499"/>
        <dbReference type="ChEBI" id="CHEBI:29950"/>
        <dbReference type="ChEBI" id="CHEBI:30616"/>
        <dbReference type="ChEBI" id="CHEBI:33019"/>
        <dbReference type="ChEBI" id="CHEBI:61963"/>
        <dbReference type="ChEBI" id="CHEBI:65315"/>
        <dbReference type="ChEBI" id="CHEBI:87170"/>
        <dbReference type="ChEBI" id="CHEBI:456215"/>
        <dbReference type="EC" id="2.8.1.13"/>
    </reaction>
</comment>
<comment type="subcellular location">
    <subcellularLocation>
        <location evidence="1">Cytoplasm</location>
    </subcellularLocation>
</comment>
<comment type="similarity">
    <text evidence="1">Belongs to the MnmA/TRMU family.</text>
</comment>